<keyword id="KW-0067">ATP-binding</keyword>
<keyword id="KW-0963">Cytoplasm</keyword>
<keyword id="KW-0418">Kinase</keyword>
<keyword id="KW-0547">Nucleotide-binding</keyword>
<keyword id="KW-0808">Transferase</keyword>
<organism>
    <name type="scientific">Acinetobacter baylyi (strain ATCC 33305 / BD413 / ADP1)</name>
    <dbReference type="NCBI Taxonomy" id="62977"/>
    <lineage>
        <taxon>Bacteria</taxon>
        <taxon>Pseudomonadati</taxon>
        <taxon>Pseudomonadota</taxon>
        <taxon>Gammaproteobacteria</taxon>
        <taxon>Moraxellales</taxon>
        <taxon>Moraxellaceae</taxon>
        <taxon>Acinetobacter</taxon>
    </lineage>
</organism>
<gene>
    <name evidence="1" type="primary">cmk</name>
    <name type="ordered locus">ACIAD2348</name>
</gene>
<name>KCY_ACIAD</name>
<sequence length="227" mass="24992">MTVQIITIDGPSGSGKGTLAAKLANHYGFHLLDSGALYRLLGLSLHHKNLLDDLDTCLSECVEAAIQINIKFETKNDSTIILLDGEDVTQTIRTERVGEFASKVAAVPELRTALFERQRAFIQLPGLVADGRDMATAIFPEAQAKIYLTASAESRAERRVKQLQGMGLDVKISDILANIQSRDKRDMERTVAPLRPAVDAYQIDSSNLSIDEVFQLMVNYVDQCIKA</sequence>
<proteinExistence type="inferred from homology"/>
<accession>Q6F9Y6</accession>
<evidence type="ECO:0000255" key="1">
    <source>
        <dbReference type="HAMAP-Rule" id="MF_00238"/>
    </source>
</evidence>
<comment type="catalytic activity">
    <reaction evidence="1">
        <text>CMP + ATP = CDP + ADP</text>
        <dbReference type="Rhea" id="RHEA:11600"/>
        <dbReference type="ChEBI" id="CHEBI:30616"/>
        <dbReference type="ChEBI" id="CHEBI:58069"/>
        <dbReference type="ChEBI" id="CHEBI:60377"/>
        <dbReference type="ChEBI" id="CHEBI:456216"/>
        <dbReference type="EC" id="2.7.4.25"/>
    </reaction>
</comment>
<comment type="catalytic activity">
    <reaction evidence="1">
        <text>dCMP + ATP = dCDP + ADP</text>
        <dbReference type="Rhea" id="RHEA:25094"/>
        <dbReference type="ChEBI" id="CHEBI:30616"/>
        <dbReference type="ChEBI" id="CHEBI:57566"/>
        <dbReference type="ChEBI" id="CHEBI:58593"/>
        <dbReference type="ChEBI" id="CHEBI:456216"/>
        <dbReference type="EC" id="2.7.4.25"/>
    </reaction>
</comment>
<comment type="subcellular location">
    <subcellularLocation>
        <location evidence="1">Cytoplasm</location>
    </subcellularLocation>
</comment>
<comment type="similarity">
    <text evidence="1">Belongs to the cytidylate kinase family. Type 1 subfamily.</text>
</comment>
<reference key="1">
    <citation type="journal article" date="2004" name="Nucleic Acids Res.">
        <title>Unique features revealed by the genome sequence of Acinetobacter sp. ADP1, a versatile and naturally transformation competent bacterium.</title>
        <authorList>
            <person name="Barbe V."/>
            <person name="Vallenet D."/>
            <person name="Fonknechten N."/>
            <person name="Kreimeyer A."/>
            <person name="Oztas S."/>
            <person name="Labarre L."/>
            <person name="Cruveiller S."/>
            <person name="Robert C."/>
            <person name="Duprat S."/>
            <person name="Wincker P."/>
            <person name="Ornston L.N."/>
            <person name="Weissenbach J."/>
            <person name="Marliere P."/>
            <person name="Cohen G.N."/>
            <person name="Medigue C."/>
        </authorList>
    </citation>
    <scope>NUCLEOTIDE SEQUENCE [LARGE SCALE GENOMIC DNA]</scope>
    <source>
        <strain>ATCC 33305 / BD413 / ADP1</strain>
    </source>
</reference>
<feature type="chain" id="PRO_0000131869" description="Cytidylate kinase">
    <location>
        <begin position="1"/>
        <end position="227"/>
    </location>
</feature>
<feature type="binding site" evidence="1">
    <location>
        <begin position="10"/>
        <end position="18"/>
    </location>
    <ligand>
        <name>ATP</name>
        <dbReference type="ChEBI" id="CHEBI:30616"/>
    </ligand>
</feature>
<protein>
    <recommendedName>
        <fullName evidence="1">Cytidylate kinase</fullName>
        <shortName evidence="1">CK</shortName>
        <ecNumber evidence="1">2.7.4.25</ecNumber>
    </recommendedName>
    <alternativeName>
        <fullName evidence="1">Cytidine monophosphate kinase</fullName>
        <shortName evidence="1">CMP kinase</shortName>
    </alternativeName>
</protein>
<dbReference type="EC" id="2.7.4.25" evidence="1"/>
<dbReference type="EMBL" id="CR543861">
    <property type="protein sequence ID" value="CAG69127.1"/>
    <property type="molecule type" value="Genomic_DNA"/>
</dbReference>
<dbReference type="RefSeq" id="WP_004928142.1">
    <property type="nucleotide sequence ID" value="NC_005966.1"/>
</dbReference>
<dbReference type="SMR" id="Q6F9Y6"/>
<dbReference type="STRING" id="202950.GCA_001485005_00059"/>
<dbReference type="GeneID" id="45234664"/>
<dbReference type="KEGG" id="aci:ACIAD2348"/>
<dbReference type="eggNOG" id="COG0283">
    <property type="taxonomic scope" value="Bacteria"/>
</dbReference>
<dbReference type="HOGENOM" id="CLU_079959_2_0_6"/>
<dbReference type="OrthoDB" id="9807434at2"/>
<dbReference type="BioCyc" id="ASP62977:ACIAD_RS10735-MONOMER"/>
<dbReference type="Proteomes" id="UP000000430">
    <property type="component" value="Chromosome"/>
</dbReference>
<dbReference type="GO" id="GO:0005829">
    <property type="term" value="C:cytosol"/>
    <property type="evidence" value="ECO:0007669"/>
    <property type="project" value="TreeGrafter"/>
</dbReference>
<dbReference type="GO" id="GO:0005524">
    <property type="term" value="F:ATP binding"/>
    <property type="evidence" value="ECO:0007669"/>
    <property type="project" value="UniProtKB-UniRule"/>
</dbReference>
<dbReference type="GO" id="GO:0036430">
    <property type="term" value="F:CMP kinase activity"/>
    <property type="evidence" value="ECO:0007669"/>
    <property type="project" value="RHEA"/>
</dbReference>
<dbReference type="GO" id="GO:0036431">
    <property type="term" value="F:dCMP kinase activity"/>
    <property type="evidence" value="ECO:0007669"/>
    <property type="project" value="RHEA"/>
</dbReference>
<dbReference type="GO" id="GO:0015949">
    <property type="term" value="P:nucleobase-containing small molecule interconversion"/>
    <property type="evidence" value="ECO:0007669"/>
    <property type="project" value="TreeGrafter"/>
</dbReference>
<dbReference type="GO" id="GO:0006220">
    <property type="term" value="P:pyrimidine nucleotide metabolic process"/>
    <property type="evidence" value="ECO:0007669"/>
    <property type="project" value="UniProtKB-UniRule"/>
</dbReference>
<dbReference type="CDD" id="cd02020">
    <property type="entry name" value="CMPK"/>
    <property type="match status" value="1"/>
</dbReference>
<dbReference type="Gene3D" id="3.40.50.300">
    <property type="entry name" value="P-loop containing nucleotide triphosphate hydrolases"/>
    <property type="match status" value="1"/>
</dbReference>
<dbReference type="HAMAP" id="MF_00238">
    <property type="entry name" value="Cytidyl_kinase_type1"/>
    <property type="match status" value="1"/>
</dbReference>
<dbReference type="InterPro" id="IPR003136">
    <property type="entry name" value="Cytidylate_kin"/>
</dbReference>
<dbReference type="InterPro" id="IPR011994">
    <property type="entry name" value="Cytidylate_kinase_dom"/>
</dbReference>
<dbReference type="InterPro" id="IPR027417">
    <property type="entry name" value="P-loop_NTPase"/>
</dbReference>
<dbReference type="NCBIfam" id="TIGR00017">
    <property type="entry name" value="cmk"/>
    <property type="match status" value="1"/>
</dbReference>
<dbReference type="PANTHER" id="PTHR21299:SF2">
    <property type="entry name" value="CYTIDYLATE KINASE"/>
    <property type="match status" value="1"/>
</dbReference>
<dbReference type="PANTHER" id="PTHR21299">
    <property type="entry name" value="CYTIDYLATE KINASE/PANTOATE-BETA-ALANINE LIGASE"/>
    <property type="match status" value="1"/>
</dbReference>
<dbReference type="Pfam" id="PF02224">
    <property type="entry name" value="Cytidylate_kin"/>
    <property type="match status" value="1"/>
</dbReference>
<dbReference type="SUPFAM" id="SSF52540">
    <property type="entry name" value="P-loop containing nucleoside triphosphate hydrolases"/>
    <property type="match status" value="1"/>
</dbReference>